<sequence>MTQPVTVEVRTDPPYPVIIGTGLLDDLARVLDGRHKVAILHQPTLTQTAEVIRNHLADKGIDAHRIEIPDAEGGKELPVVGFIWEVLGRIGLGRKDAIVSLGGGAATDVAGFAAATWLRGVDIVHVPTTLLGMVDAAVGGKTGINTDAGKNLVGAFHQPAAVLIDLATLESLPRNEIVAGMAEIVKAGFIADPVILDMIEADPQAALDPTGQVLPELIRRAVVVKAEVVAADEKESQLREILNYGHTLAHAIERRERYQWRHGAAVSVGLVFAAELGRLAGRLDDATAERHRAILISLGLPVTYDADALPQLMEAMLGDKKTRAGVLRFVVLDGLGKPGRLEGPDPSLLAAAYAEVARS</sequence>
<keyword id="KW-0028">Amino-acid biosynthesis</keyword>
<keyword id="KW-0057">Aromatic amino acid biosynthesis</keyword>
<keyword id="KW-0170">Cobalt</keyword>
<keyword id="KW-0963">Cytoplasm</keyword>
<keyword id="KW-0456">Lyase</keyword>
<keyword id="KW-0479">Metal-binding</keyword>
<keyword id="KW-0520">NAD</keyword>
<keyword id="KW-0547">Nucleotide-binding</keyword>
<keyword id="KW-0862">Zinc</keyword>
<protein>
    <recommendedName>
        <fullName evidence="1">3-dehydroquinate synthase</fullName>
        <shortName evidence="1">DHQS</shortName>
        <ecNumber evidence="1">4.2.3.4</ecNumber>
    </recommendedName>
</protein>
<organism>
    <name type="scientific">Mycolicibacterium vanbaalenii (strain DSM 7251 / JCM 13017 / BCRC 16820 / KCTC 9966 / NRRL B-24157 / PYR-1)</name>
    <name type="common">Mycobacterium vanbaalenii</name>
    <dbReference type="NCBI Taxonomy" id="350058"/>
    <lineage>
        <taxon>Bacteria</taxon>
        <taxon>Bacillati</taxon>
        <taxon>Actinomycetota</taxon>
        <taxon>Actinomycetes</taxon>
        <taxon>Mycobacteriales</taxon>
        <taxon>Mycobacteriaceae</taxon>
        <taxon>Mycolicibacterium</taxon>
    </lineage>
</organism>
<dbReference type="EC" id="4.2.3.4" evidence="1"/>
<dbReference type="EMBL" id="CP000511">
    <property type="protein sequence ID" value="ABM13455.1"/>
    <property type="molecule type" value="Genomic_DNA"/>
</dbReference>
<dbReference type="RefSeq" id="WP_011779864.1">
    <property type="nucleotide sequence ID" value="NC_008726.1"/>
</dbReference>
<dbReference type="SMR" id="A1T8F5"/>
<dbReference type="STRING" id="350058.Mvan_2647"/>
<dbReference type="KEGG" id="mva:Mvan_2647"/>
<dbReference type="eggNOG" id="COG0337">
    <property type="taxonomic scope" value="Bacteria"/>
</dbReference>
<dbReference type="HOGENOM" id="CLU_001201_0_3_11"/>
<dbReference type="UniPathway" id="UPA00053">
    <property type="reaction ID" value="UER00085"/>
</dbReference>
<dbReference type="Proteomes" id="UP000009159">
    <property type="component" value="Chromosome"/>
</dbReference>
<dbReference type="GO" id="GO:0005737">
    <property type="term" value="C:cytoplasm"/>
    <property type="evidence" value="ECO:0007669"/>
    <property type="project" value="UniProtKB-SubCell"/>
</dbReference>
<dbReference type="GO" id="GO:0003856">
    <property type="term" value="F:3-dehydroquinate synthase activity"/>
    <property type="evidence" value="ECO:0007669"/>
    <property type="project" value="UniProtKB-UniRule"/>
</dbReference>
<dbReference type="GO" id="GO:0046872">
    <property type="term" value="F:metal ion binding"/>
    <property type="evidence" value="ECO:0007669"/>
    <property type="project" value="UniProtKB-KW"/>
</dbReference>
<dbReference type="GO" id="GO:0000166">
    <property type="term" value="F:nucleotide binding"/>
    <property type="evidence" value="ECO:0007669"/>
    <property type="project" value="UniProtKB-KW"/>
</dbReference>
<dbReference type="GO" id="GO:0008652">
    <property type="term" value="P:amino acid biosynthetic process"/>
    <property type="evidence" value="ECO:0007669"/>
    <property type="project" value="UniProtKB-KW"/>
</dbReference>
<dbReference type="GO" id="GO:0009073">
    <property type="term" value="P:aromatic amino acid family biosynthetic process"/>
    <property type="evidence" value="ECO:0007669"/>
    <property type="project" value="UniProtKB-KW"/>
</dbReference>
<dbReference type="GO" id="GO:0009423">
    <property type="term" value="P:chorismate biosynthetic process"/>
    <property type="evidence" value="ECO:0007669"/>
    <property type="project" value="UniProtKB-UniRule"/>
</dbReference>
<dbReference type="CDD" id="cd08195">
    <property type="entry name" value="DHQS"/>
    <property type="match status" value="1"/>
</dbReference>
<dbReference type="FunFam" id="3.40.50.1970:FF:000012">
    <property type="entry name" value="3-dehydroquinate synthase"/>
    <property type="match status" value="1"/>
</dbReference>
<dbReference type="Gene3D" id="3.40.50.1970">
    <property type="match status" value="1"/>
</dbReference>
<dbReference type="Gene3D" id="1.20.1090.10">
    <property type="entry name" value="Dehydroquinate synthase-like - alpha domain"/>
    <property type="match status" value="1"/>
</dbReference>
<dbReference type="HAMAP" id="MF_00110">
    <property type="entry name" value="DHQ_synthase"/>
    <property type="match status" value="1"/>
</dbReference>
<dbReference type="InterPro" id="IPR050071">
    <property type="entry name" value="Dehydroquinate_synthase"/>
</dbReference>
<dbReference type="InterPro" id="IPR016037">
    <property type="entry name" value="DHQ_synth_AroB"/>
</dbReference>
<dbReference type="InterPro" id="IPR030963">
    <property type="entry name" value="DHQ_synth_fam"/>
</dbReference>
<dbReference type="InterPro" id="IPR030960">
    <property type="entry name" value="DHQS/DOIS_N"/>
</dbReference>
<dbReference type="InterPro" id="IPR056179">
    <property type="entry name" value="DHQS_C"/>
</dbReference>
<dbReference type="NCBIfam" id="TIGR01357">
    <property type="entry name" value="aroB"/>
    <property type="match status" value="1"/>
</dbReference>
<dbReference type="PANTHER" id="PTHR43622">
    <property type="entry name" value="3-DEHYDROQUINATE SYNTHASE"/>
    <property type="match status" value="1"/>
</dbReference>
<dbReference type="PANTHER" id="PTHR43622:SF7">
    <property type="entry name" value="3-DEHYDROQUINATE SYNTHASE, CHLOROPLASTIC"/>
    <property type="match status" value="1"/>
</dbReference>
<dbReference type="Pfam" id="PF01761">
    <property type="entry name" value="DHQ_synthase"/>
    <property type="match status" value="1"/>
</dbReference>
<dbReference type="Pfam" id="PF24621">
    <property type="entry name" value="DHQS_C"/>
    <property type="match status" value="1"/>
</dbReference>
<dbReference type="PIRSF" id="PIRSF001455">
    <property type="entry name" value="DHQ_synth"/>
    <property type="match status" value="1"/>
</dbReference>
<dbReference type="SUPFAM" id="SSF56796">
    <property type="entry name" value="Dehydroquinate synthase-like"/>
    <property type="match status" value="1"/>
</dbReference>
<gene>
    <name evidence="1" type="primary">aroB</name>
    <name type="ordered locus">Mvan_2647</name>
</gene>
<comment type="function">
    <text evidence="1">Catalyzes the conversion of 3-deoxy-D-arabino-heptulosonate 7-phosphate (DAHP) to dehydroquinate (DHQ).</text>
</comment>
<comment type="catalytic activity">
    <reaction evidence="1">
        <text>7-phospho-2-dehydro-3-deoxy-D-arabino-heptonate = 3-dehydroquinate + phosphate</text>
        <dbReference type="Rhea" id="RHEA:21968"/>
        <dbReference type="ChEBI" id="CHEBI:32364"/>
        <dbReference type="ChEBI" id="CHEBI:43474"/>
        <dbReference type="ChEBI" id="CHEBI:58394"/>
        <dbReference type="EC" id="4.2.3.4"/>
    </reaction>
</comment>
<comment type="cofactor">
    <cofactor evidence="1">
        <name>Co(2+)</name>
        <dbReference type="ChEBI" id="CHEBI:48828"/>
    </cofactor>
    <cofactor evidence="1">
        <name>Zn(2+)</name>
        <dbReference type="ChEBI" id="CHEBI:29105"/>
    </cofactor>
    <text evidence="1">Binds 1 divalent metal cation per subunit. Can use either Co(2+) or Zn(2+).</text>
</comment>
<comment type="cofactor">
    <cofactor evidence="1">
        <name>NAD(+)</name>
        <dbReference type="ChEBI" id="CHEBI:57540"/>
    </cofactor>
</comment>
<comment type="pathway">
    <text evidence="1">Metabolic intermediate biosynthesis; chorismate biosynthesis; chorismate from D-erythrose 4-phosphate and phosphoenolpyruvate: step 2/7.</text>
</comment>
<comment type="subcellular location">
    <subcellularLocation>
        <location evidence="1">Cytoplasm</location>
    </subcellularLocation>
</comment>
<comment type="similarity">
    <text evidence="1">Belongs to the sugar phosphate cyclases superfamily. Dehydroquinate synthase family.</text>
</comment>
<accession>A1T8F5</accession>
<name>AROB_MYCVP</name>
<feature type="chain" id="PRO_1000094548" description="3-dehydroquinate synthase">
    <location>
        <begin position="1"/>
        <end position="359"/>
    </location>
</feature>
<feature type="binding site" evidence="1">
    <location>
        <begin position="70"/>
        <end position="75"/>
    </location>
    <ligand>
        <name>NAD(+)</name>
        <dbReference type="ChEBI" id="CHEBI:57540"/>
    </ligand>
</feature>
<feature type="binding site" evidence="1">
    <location>
        <begin position="104"/>
        <end position="108"/>
    </location>
    <ligand>
        <name>NAD(+)</name>
        <dbReference type="ChEBI" id="CHEBI:57540"/>
    </ligand>
</feature>
<feature type="binding site" evidence="1">
    <location>
        <begin position="128"/>
        <end position="129"/>
    </location>
    <ligand>
        <name>NAD(+)</name>
        <dbReference type="ChEBI" id="CHEBI:57540"/>
    </ligand>
</feature>
<feature type="binding site" evidence="1">
    <location>
        <position position="141"/>
    </location>
    <ligand>
        <name>NAD(+)</name>
        <dbReference type="ChEBI" id="CHEBI:57540"/>
    </ligand>
</feature>
<feature type="binding site" evidence="1">
    <location>
        <position position="150"/>
    </location>
    <ligand>
        <name>NAD(+)</name>
        <dbReference type="ChEBI" id="CHEBI:57540"/>
    </ligand>
</feature>
<feature type="binding site" evidence="1">
    <location>
        <position position="183"/>
    </location>
    <ligand>
        <name>Zn(2+)</name>
        <dbReference type="ChEBI" id="CHEBI:29105"/>
    </ligand>
</feature>
<feature type="binding site" evidence="1">
    <location>
        <position position="246"/>
    </location>
    <ligand>
        <name>Zn(2+)</name>
        <dbReference type="ChEBI" id="CHEBI:29105"/>
    </ligand>
</feature>
<feature type="binding site" evidence="1">
    <location>
        <position position="262"/>
    </location>
    <ligand>
        <name>Zn(2+)</name>
        <dbReference type="ChEBI" id="CHEBI:29105"/>
    </ligand>
</feature>
<proteinExistence type="inferred from homology"/>
<evidence type="ECO:0000255" key="1">
    <source>
        <dbReference type="HAMAP-Rule" id="MF_00110"/>
    </source>
</evidence>
<reference key="1">
    <citation type="submission" date="2006-12" db="EMBL/GenBank/DDBJ databases">
        <title>Complete sequence of Mycobacterium vanbaalenii PYR-1.</title>
        <authorList>
            <consortium name="US DOE Joint Genome Institute"/>
            <person name="Copeland A."/>
            <person name="Lucas S."/>
            <person name="Lapidus A."/>
            <person name="Barry K."/>
            <person name="Detter J.C."/>
            <person name="Glavina del Rio T."/>
            <person name="Hammon N."/>
            <person name="Israni S."/>
            <person name="Dalin E."/>
            <person name="Tice H."/>
            <person name="Pitluck S."/>
            <person name="Singan V."/>
            <person name="Schmutz J."/>
            <person name="Larimer F."/>
            <person name="Land M."/>
            <person name="Hauser L."/>
            <person name="Kyrpides N."/>
            <person name="Anderson I.J."/>
            <person name="Miller C."/>
            <person name="Richardson P."/>
        </authorList>
    </citation>
    <scope>NUCLEOTIDE SEQUENCE [LARGE SCALE GENOMIC DNA]</scope>
    <source>
        <strain>DSM 7251 / JCM 13017 / BCRC 16820 / KCTC 9966 / NRRL B-24157 / PYR-1</strain>
    </source>
</reference>